<dbReference type="EC" id="2.3.2.27" evidence="5"/>
<dbReference type="EMBL" id="AC005359">
    <property type="status" value="NOT_ANNOTATED_CDS"/>
    <property type="molecule type" value="Genomic_DNA"/>
</dbReference>
<dbReference type="EMBL" id="AL161514">
    <property type="protein sequence ID" value="CAB78036.1"/>
    <property type="molecule type" value="Genomic_DNA"/>
</dbReference>
<dbReference type="EMBL" id="CP002687">
    <property type="protein sequence ID" value="AEE82724.1"/>
    <property type="molecule type" value="Genomic_DNA"/>
</dbReference>
<dbReference type="PIR" id="D85092">
    <property type="entry name" value="D85092"/>
</dbReference>
<dbReference type="RefSeq" id="NP_192651.1">
    <property type="nucleotide sequence ID" value="NM_116981.3"/>
</dbReference>
<dbReference type="SMR" id="Q9M0R5"/>
<dbReference type="STRING" id="3702.Q9M0R5"/>
<dbReference type="PaxDb" id="3702-AT4G09120.1"/>
<dbReference type="EnsemblPlants" id="AT4G09120.1">
    <property type="protein sequence ID" value="AT4G09120.1"/>
    <property type="gene ID" value="AT4G09120"/>
</dbReference>
<dbReference type="GeneID" id="826490"/>
<dbReference type="Gramene" id="AT4G09120.1">
    <property type="protein sequence ID" value="AT4G09120.1"/>
    <property type="gene ID" value="AT4G09120"/>
</dbReference>
<dbReference type="KEGG" id="ath:AT4G09120"/>
<dbReference type="Araport" id="AT4G09120"/>
<dbReference type="TAIR" id="AT4G09120">
    <property type="gene designation" value="ATL36"/>
</dbReference>
<dbReference type="eggNOG" id="KOG0800">
    <property type="taxonomic scope" value="Eukaryota"/>
</dbReference>
<dbReference type="HOGENOM" id="CLU_035191_1_0_1"/>
<dbReference type="InParanoid" id="Q9M0R5"/>
<dbReference type="OMA" id="MNIFTRY"/>
<dbReference type="PhylomeDB" id="Q9M0R5"/>
<dbReference type="UniPathway" id="UPA00143"/>
<dbReference type="PRO" id="PR:Q9M0R5"/>
<dbReference type="Proteomes" id="UP000006548">
    <property type="component" value="Chromosome 4"/>
</dbReference>
<dbReference type="GO" id="GO:0016020">
    <property type="term" value="C:membrane"/>
    <property type="evidence" value="ECO:0007669"/>
    <property type="project" value="UniProtKB-SubCell"/>
</dbReference>
<dbReference type="GO" id="GO:0016740">
    <property type="term" value="F:transferase activity"/>
    <property type="evidence" value="ECO:0007669"/>
    <property type="project" value="UniProtKB-KW"/>
</dbReference>
<dbReference type="GO" id="GO:0008270">
    <property type="term" value="F:zinc ion binding"/>
    <property type="evidence" value="ECO:0007669"/>
    <property type="project" value="UniProtKB-KW"/>
</dbReference>
<dbReference type="GO" id="GO:0016567">
    <property type="term" value="P:protein ubiquitination"/>
    <property type="evidence" value="ECO:0007669"/>
    <property type="project" value="UniProtKB-UniPathway"/>
</dbReference>
<dbReference type="CDD" id="cd16461">
    <property type="entry name" value="RING-H2_EL5-like"/>
    <property type="match status" value="1"/>
</dbReference>
<dbReference type="FunFam" id="3.30.40.10:FF:000187">
    <property type="entry name" value="E3 ubiquitin-protein ligase ATL6"/>
    <property type="match status" value="1"/>
</dbReference>
<dbReference type="Gene3D" id="3.30.40.10">
    <property type="entry name" value="Zinc/RING finger domain, C3HC4 (zinc finger)"/>
    <property type="match status" value="1"/>
</dbReference>
<dbReference type="InterPro" id="IPR053238">
    <property type="entry name" value="RING-H2_zinc_finger"/>
</dbReference>
<dbReference type="InterPro" id="IPR001841">
    <property type="entry name" value="Znf_RING"/>
</dbReference>
<dbReference type="InterPro" id="IPR013083">
    <property type="entry name" value="Znf_RING/FYVE/PHD"/>
</dbReference>
<dbReference type="PANTHER" id="PTHR14155">
    <property type="entry name" value="RING FINGER DOMAIN-CONTAINING"/>
    <property type="match status" value="1"/>
</dbReference>
<dbReference type="PANTHER" id="PTHR14155:SF547">
    <property type="entry name" value="RING-H2 FINGER PROTEIN ATL35-RELATED"/>
    <property type="match status" value="1"/>
</dbReference>
<dbReference type="Pfam" id="PF13639">
    <property type="entry name" value="zf-RING_2"/>
    <property type="match status" value="1"/>
</dbReference>
<dbReference type="SMART" id="SM00184">
    <property type="entry name" value="RING"/>
    <property type="match status" value="1"/>
</dbReference>
<dbReference type="SUPFAM" id="SSF57850">
    <property type="entry name" value="RING/U-box"/>
    <property type="match status" value="1"/>
</dbReference>
<dbReference type="PROSITE" id="PS50089">
    <property type="entry name" value="ZF_RING_2"/>
    <property type="match status" value="1"/>
</dbReference>
<gene>
    <name type="primary">ATL36</name>
    <name type="ordered locus">At4g09120</name>
    <name type="ORF">F23J3.150</name>
    <name type="ORF">T8A17.6</name>
</gene>
<name>ATL36_ARATH</name>
<organism>
    <name type="scientific">Arabidopsis thaliana</name>
    <name type="common">Mouse-ear cress</name>
    <dbReference type="NCBI Taxonomy" id="3702"/>
    <lineage>
        <taxon>Eukaryota</taxon>
        <taxon>Viridiplantae</taxon>
        <taxon>Streptophyta</taxon>
        <taxon>Embryophyta</taxon>
        <taxon>Tracheophyta</taxon>
        <taxon>Spermatophyta</taxon>
        <taxon>Magnoliopsida</taxon>
        <taxon>eudicotyledons</taxon>
        <taxon>Gunneridae</taxon>
        <taxon>Pentapetalae</taxon>
        <taxon>rosids</taxon>
        <taxon>malvids</taxon>
        <taxon>Brassicales</taxon>
        <taxon>Brassicaceae</taxon>
        <taxon>Camelineae</taxon>
        <taxon>Arabidopsis</taxon>
    </lineage>
</organism>
<proteinExistence type="inferred from homology"/>
<sequence>MNIFTRYHLPRVVSGVILPLFLFHLLPYVTCQQESVPTNSIRQTNLSADSIIAIVVLAIFISLGMVSCCLHCIFYREEIGAAGQDVLHSRARRGLEKEVIESFPTFLYSEVKGLKIGKGGVECAICLSEFEDQETLRWMPPCSHTFHANCIDVWLSSWSTCPVCRANLSLKPGESYPYLNMDVETGGVQKLPNERSLTGNSVTTRSRSTGLLSSWRMAEIFVPRSHSTGHSLVQQLGENLDRFTLQLPEEVQRQLVSLNLIRRSHIVLPQAVSSRQGYRSGSVGSERGGFSQGRQTHRRALSMSFSFSFQTASVRSIHDMNDQAQAKDKYFGERSFERLMPEEKV</sequence>
<protein>
    <recommendedName>
        <fullName>Putative RING-H2 finger protein ATL36</fullName>
        <ecNumber evidence="5">2.3.2.27</ecNumber>
    </recommendedName>
    <alternativeName>
        <fullName evidence="5">RING-type E3 ubiquitin transferase ATL36</fullName>
    </alternativeName>
</protein>
<accession>Q9M0R5</accession>
<evidence type="ECO:0000250" key="1"/>
<evidence type="ECO:0000250" key="2">
    <source>
        <dbReference type="UniProtKB" id="Q8RXX9"/>
    </source>
</evidence>
<evidence type="ECO:0000255" key="3"/>
<evidence type="ECO:0000255" key="4">
    <source>
        <dbReference type="PROSITE-ProRule" id="PRU00175"/>
    </source>
</evidence>
<evidence type="ECO:0000305" key="5"/>
<comment type="catalytic activity">
    <reaction evidence="5">
        <text>S-ubiquitinyl-[E2 ubiquitin-conjugating enzyme]-L-cysteine + [acceptor protein]-L-lysine = [E2 ubiquitin-conjugating enzyme]-L-cysteine + N(6)-ubiquitinyl-[acceptor protein]-L-lysine.</text>
        <dbReference type="EC" id="2.3.2.27"/>
    </reaction>
</comment>
<comment type="pathway">
    <text>Protein modification; protein ubiquitination.</text>
</comment>
<comment type="subcellular location">
    <subcellularLocation>
        <location evidence="5">Membrane</location>
        <topology evidence="5">Single-pass membrane protein</topology>
    </subcellularLocation>
</comment>
<comment type="domain">
    <text evidence="1">The RING-type zinc finger domain mediates binding to an E2 ubiquitin-conjugating enzyme.</text>
</comment>
<comment type="similarity">
    <text evidence="5">Belongs to the RING-type zinc finger family. ATL subfamily.</text>
</comment>
<feature type="signal peptide" evidence="3">
    <location>
        <begin position="1"/>
        <end position="31"/>
    </location>
</feature>
<feature type="chain" id="PRO_0000030709" description="Putative RING-H2 finger protein ATL36">
    <location>
        <begin position="32"/>
        <end position="345"/>
    </location>
</feature>
<feature type="transmembrane region" description="Helical" evidence="3">
    <location>
        <begin position="50"/>
        <end position="70"/>
    </location>
</feature>
<feature type="zinc finger region" description="RING-type; atypical" evidence="4">
    <location>
        <begin position="123"/>
        <end position="165"/>
    </location>
</feature>
<feature type="modified residue" description="Phosphoserine" evidence="2">
    <location>
        <position position="264"/>
    </location>
</feature>
<reference key="1">
    <citation type="journal article" date="1999" name="Nature">
        <title>Sequence and analysis of chromosome 4 of the plant Arabidopsis thaliana.</title>
        <authorList>
            <person name="Mayer K.F.X."/>
            <person name="Schueller C."/>
            <person name="Wambutt R."/>
            <person name="Murphy G."/>
            <person name="Volckaert G."/>
            <person name="Pohl T."/>
            <person name="Duesterhoeft A."/>
            <person name="Stiekema W."/>
            <person name="Entian K.-D."/>
            <person name="Terryn N."/>
            <person name="Harris B."/>
            <person name="Ansorge W."/>
            <person name="Brandt P."/>
            <person name="Grivell L.A."/>
            <person name="Rieger M."/>
            <person name="Weichselgartner M."/>
            <person name="de Simone V."/>
            <person name="Obermaier B."/>
            <person name="Mache R."/>
            <person name="Mueller M."/>
            <person name="Kreis M."/>
            <person name="Delseny M."/>
            <person name="Puigdomenech P."/>
            <person name="Watson M."/>
            <person name="Schmidtheini T."/>
            <person name="Reichert B."/>
            <person name="Portetelle D."/>
            <person name="Perez-Alonso M."/>
            <person name="Boutry M."/>
            <person name="Bancroft I."/>
            <person name="Vos P."/>
            <person name="Hoheisel J."/>
            <person name="Zimmermann W."/>
            <person name="Wedler H."/>
            <person name="Ridley P."/>
            <person name="Langham S.-A."/>
            <person name="McCullagh B."/>
            <person name="Bilham L."/>
            <person name="Robben J."/>
            <person name="van der Schueren J."/>
            <person name="Grymonprez B."/>
            <person name="Chuang Y.-J."/>
            <person name="Vandenbussche F."/>
            <person name="Braeken M."/>
            <person name="Weltjens I."/>
            <person name="Voet M."/>
            <person name="Bastiaens I."/>
            <person name="Aert R."/>
            <person name="Defoor E."/>
            <person name="Weitzenegger T."/>
            <person name="Bothe G."/>
            <person name="Ramsperger U."/>
            <person name="Hilbert H."/>
            <person name="Braun M."/>
            <person name="Holzer E."/>
            <person name="Brandt A."/>
            <person name="Peters S."/>
            <person name="van Staveren M."/>
            <person name="Dirkse W."/>
            <person name="Mooijman P."/>
            <person name="Klein Lankhorst R."/>
            <person name="Rose M."/>
            <person name="Hauf J."/>
            <person name="Koetter P."/>
            <person name="Berneiser S."/>
            <person name="Hempel S."/>
            <person name="Feldpausch M."/>
            <person name="Lamberth S."/>
            <person name="Van den Daele H."/>
            <person name="De Keyser A."/>
            <person name="Buysshaert C."/>
            <person name="Gielen J."/>
            <person name="Villarroel R."/>
            <person name="De Clercq R."/>
            <person name="van Montagu M."/>
            <person name="Rogers J."/>
            <person name="Cronin A."/>
            <person name="Quail M.A."/>
            <person name="Bray-Allen S."/>
            <person name="Clark L."/>
            <person name="Doggett J."/>
            <person name="Hall S."/>
            <person name="Kay M."/>
            <person name="Lennard N."/>
            <person name="McLay K."/>
            <person name="Mayes R."/>
            <person name="Pettett A."/>
            <person name="Rajandream M.A."/>
            <person name="Lyne M."/>
            <person name="Benes V."/>
            <person name="Rechmann S."/>
            <person name="Borkova D."/>
            <person name="Bloecker H."/>
            <person name="Scharfe M."/>
            <person name="Grimm M."/>
            <person name="Loehnert T.-H."/>
            <person name="Dose S."/>
            <person name="de Haan M."/>
            <person name="Maarse A.C."/>
            <person name="Schaefer M."/>
            <person name="Mueller-Auer S."/>
            <person name="Gabel C."/>
            <person name="Fuchs M."/>
            <person name="Fartmann B."/>
            <person name="Granderath K."/>
            <person name="Dauner D."/>
            <person name="Herzl A."/>
            <person name="Neumann S."/>
            <person name="Argiriou A."/>
            <person name="Vitale D."/>
            <person name="Liguori R."/>
            <person name="Piravandi E."/>
            <person name="Massenet O."/>
            <person name="Quigley F."/>
            <person name="Clabauld G."/>
            <person name="Muendlein A."/>
            <person name="Felber R."/>
            <person name="Schnabl S."/>
            <person name="Hiller R."/>
            <person name="Schmidt W."/>
            <person name="Lecharny A."/>
            <person name="Aubourg S."/>
            <person name="Chefdor F."/>
            <person name="Cooke R."/>
            <person name="Berger C."/>
            <person name="Monfort A."/>
            <person name="Casacuberta E."/>
            <person name="Gibbons T."/>
            <person name="Weber N."/>
            <person name="Vandenbol M."/>
            <person name="Bargues M."/>
            <person name="Terol J."/>
            <person name="Torres A."/>
            <person name="Perez-Perez A."/>
            <person name="Purnelle B."/>
            <person name="Bent E."/>
            <person name="Johnson S."/>
            <person name="Tacon D."/>
            <person name="Jesse T."/>
            <person name="Heijnen L."/>
            <person name="Schwarz S."/>
            <person name="Scholler P."/>
            <person name="Heber S."/>
            <person name="Francs P."/>
            <person name="Bielke C."/>
            <person name="Frishman D."/>
            <person name="Haase D."/>
            <person name="Lemcke K."/>
            <person name="Mewes H.-W."/>
            <person name="Stocker S."/>
            <person name="Zaccaria P."/>
            <person name="Bevan M."/>
            <person name="Wilson R.K."/>
            <person name="de la Bastide M."/>
            <person name="Habermann K."/>
            <person name="Parnell L."/>
            <person name="Dedhia N."/>
            <person name="Gnoj L."/>
            <person name="Schutz K."/>
            <person name="Huang E."/>
            <person name="Spiegel L."/>
            <person name="Sekhon M."/>
            <person name="Murray J."/>
            <person name="Sheet P."/>
            <person name="Cordes M."/>
            <person name="Abu-Threideh J."/>
            <person name="Stoneking T."/>
            <person name="Kalicki J."/>
            <person name="Graves T."/>
            <person name="Harmon G."/>
            <person name="Edwards J."/>
            <person name="Latreille P."/>
            <person name="Courtney L."/>
            <person name="Cloud J."/>
            <person name="Abbott A."/>
            <person name="Scott K."/>
            <person name="Johnson D."/>
            <person name="Minx P."/>
            <person name="Bentley D."/>
            <person name="Fulton B."/>
            <person name="Miller N."/>
            <person name="Greco T."/>
            <person name="Kemp K."/>
            <person name="Kramer J."/>
            <person name="Fulton L."/>
            <person name="Mardis E."/>
            <person name="Dante M."/>
            <person name="Pepin K."/>
            <person name="Hillier L.W."/>
            <person name="Nelson J."/>
            <person name="Spieth J."/>
            <person name="Ryan E."/>
            <person name="Andrews S."/>
            <person name="Geisel C."/>
            <person name="Layman D."/>
            <person name="Du H."/>
            <person name="Ali J."/>
            <person name="Berghoff A."/>
            <person name="Jones K."/>
            <person name="Drone K."/>
            <person name="Cotton M."/>
            <person name="Joshu C."/>
            <person name="Antonoiu B."/>
            <person name="Zidanic M."/>
            <person name="Strong C."/>
            <person name="Sun H."/>
            <person name="Lamar B."/>
            <person name="Yordan C."/>
            <person name="Ma P."/>
            <person name="Zhong J."/>
            <person name="Preston R."/>
            <person name="Vil D."/>
            <person name="Shekher M."/>
            <person name="Matero A."/>
            <person name="Shah R."/>
            <person name="Swaby I.K."/>
            <person name="O'Shaughnessy A."/>
            <person name="Rodriguez M."/>
            <person name="Hoffman J."/>
            <person name="Till S."/>
            <person name="Granat S."/>
            <person name="Shohdy N."/>
            <person name="Hasegawa A."/>
            <person name="Hameed A."/>
            <person name="Lodhi M."/>
            <person name="Johnson A."/>
            <person name="Chen E."/>
            <person name="Marra M.A."/>
            <person name="Martienssen R."/>
            <person name="McCombie W.R."/>
        </authorList>
    </citation>
    <scope>NUCLEOTIDE SEQUENCE [LARGE SCALE GENOMIC DNA]</scope>
    <source>
        <strain>cv. Columbia</strain>
    </source>
</reference>
<reference key="2">
    <citation type="journal article" date="2017" name="Plant J.">
        <title>Araport11: a complete reannotation of the Arabidopsis thaliana reference genome.</title>
        <authorList>
            <person name="Cheng C.Y."/>
            <person name="Krishnakumar V."/>
            <person name="Chan A.P."/>
            <person name="Thibaud-Nissen F."/>
            <person name="Schobel S."/>
            <person name="Town C.D."/>
        </authorList>
    </citation>
    <scope>GENOME REANNOTATION</scope>
    <source>
        <strain>cv. Columbia</strain>
    </source>
</reference>
<reference key="3">
    <citation type="journal article" date="2002" name="Genome Biol.">
        <title>Evaluation and classification of RING-finger domains encoded by the Arabidopsis genome.</title>
        <authorList>
            <person name="Kosarev P."/>
            <person name="Mayer K.F.X."/>
            <person name="Hardtke C.S."/>
        </authorList>
    </citation>
    <scope>GENE FAMILY ORGANIZATION</scope>
</reference>
<reference key="4">
    <citation type="journal article" date="2006" name="J. Mol. Evol.">
        <title>The ATL gene family from Arabidopsis thaliana and Oryza sativa comprises a large number of putative ubiquitin ligases of the RING-H2 type.</title>
        <authorList>
            <person name="Serrano M."/>
            <person name="Parra S."/>
            <person name="Alcaraz L.D."/>
            <person name="Guzman P."/>
        </authorList>
    </citation>
    <scope>NOMENCLATURE</scope>
    <scope>GENE FAMILY ORGANIZATION</scope>
</reference>
<keyword id="KW-0472">Membrane</keyword>
<keyword id="KW-0479">Metal-binding</keyword>
<keyword id="KW-0597">Phosphoprotein</keyword>
<keyword id="KW-1185">Reference proteome</keyword>
<keyword id="KW-0732">Signal</keyword>
<keyword id="KW-0808">Transferase</keyword>
<keyword id="KW-0812">Transmembrane</keyword>
<keyword id="KW-1133">Transmembrane helix</keyword>
<keyword id="KW-0833">Ubl conjugation pathway</keyword>
<keyword id="KW-0862">Zinc</keyword>
<keyword id="KW-0863">Zinc-finger</keyword>